<proteinExistence type="evidence at protein level"/>
<comment type="function">
    <text evidence="5 6">May coordinately regulate cell cycle progression and transcription during spermatogenesis. Inhibits degradation of polyubiquitinated cyclin A and cyclin B1 and thereby arrests the cell cycle at early M phase. ESXR1-N acts as a transcriptional repressor. Binds to the sequence 5'-TAATGTTATTA-3' which is present within the first intron of the KRAS gene and inhibits its expression. ESXR1-C has the ability to inhibit cyclin turnover.</text>
</comment>
<comment type="subcellular location">
    <subcellularLocation>
        <location evidence="5">Cytoplasm</location>
    </subcellularLocation>
    <subcellularLocation>
        <location evidence="2 5">Nucleus</location>
    </subcellularLocation>
    <text>ESXR1-N localizes specifically to the nucleus while ESXR1-C localizes specifically to the cytoplasm.</text>
</comment>
<comment type="tissue specificity">
    <text evidence="4 5">Expressed in placenta and testis. Expressed in testicular germ cell tumors.</text>
</comment>
<comment type="PTM">
    <text evidence="5">Undergoes proteolytic cleavage; produces a 45 kDa N-terminal homeodomain-containing fragment (ESXR1-N) and a 20 kDa C-terminal fragment (ESXR1-C).</text>
</comment>
<dbReference type="EMBL" id="AY114148">
    <property type="protein sequence ID" value="AAM62141.1"/>
    <property type="molecule type" value="mRNA"/>
</dbReference>
<dbReference type="EMBL" id="AL049631">
    <property type="status" value="NOT_ANNOTATED_CDS"/>
    <property type="molecule type" value="Genomic_DNA"/>
</dbReference>
<dbReference type="EMBL" id="CH471120">
    <property type="protein sequence ID" value="EAX02755.1"/>
    <property type="molecule type" value="Genomic_DNA"/>
</dbReference>
<dbReference type="EMBL" id="BC042633">
    <property type="protein sequence ID" value="AAH42633.1"/>
    <property type="molecule type" value="mRNA"/>
</dbReference>
<dbReference type="EMBL" id="BC053599">
    <property type="protein sequence ID" value="AAH53599.1"/>
    <property type="molecule type" value="mRNA"/>
</dbReference>
<dbReference type="CCDS" id="CCDS14516.1"/>
<dbReference type="RefSeq" id="NP_703149.1">
    <property type="nucleotide sequence ID" value="NM_153448.4"/>
</dbReference>
<dbReference type="BioGRID" id="123270">
    <property type="interactions" value="3"/>
</dbReference>
<dbReference type="FunCoup" id="Q8N693">
    <property type="interactions" value="72"/>
</dbReference>
<dbReference type="IntAct" id="Q8N693">
    <property type="interactions" value="3"/>
</dbReference>
<dbReference type="MINT" id="Q8N693"/>
<dbReference type="STRING" id="9606.ENSP00000361669"/>
<dbReference type="GlyGen" id="Q8N693">
    <property type="glycosylation" value="1 site, 1 O-linked glycan (1 site)"/>
</dbReference>
<dbReference type="iPTMnet" id="Q8N693"/>
<dbReference type="PhosphoSitePlus" id="Q8N693"/>
<dbReference type="BioMuta" id="ESX1"/>
<dbReference type="DMDM" id="116241356"/>
<dbReference type="jPOST" id="Q8N693"/>
<dbReference type="MassIVE" id="Q8N693"/>
<dbReference type="PaxDb" id="9606-ENSP00000361669"/>
<dbReference type="PeptideAtlas" id="Q8N693"/>
<dbReference type="ProteomicsDB" id="72146"/>
<dbReference type="Antibodypedia" id="15003">
    <property type="antibodies" value="129 antibodies from 28 providers"/>
</dbReference>
<dbReference type="DNASU" id="80712"/>
<dbReference type="Ensembl" id="ENST00000372588.4">
    <property type="protein sequence ID" value="ENSP00000361669.4"/>
    <property type="gene ID" value="ENSG00000123576.5"/>
</dbReference>
<dbReference type="GeneID" id="80712"/>
<dbReference type="KEGG" id="hsa:80712"/>
<dbReference type="MANE-Select" id="ENST00000372588.4">
    <property type="protein sequence ID" value="ENSP00000361669.4"/>
    <property type="RefSeq nucleotide sequence ID" value="NM_153448.4"/>
    <property type="RefSeq protein sequence ID" value="NP_703149.1"/>
</dbReference>
<dbReference type="UCSC" id="uc004ely.4">
    <property type="organism name" value="human"/>
</dbReference>
<dbReference type="AGR" id="HGNC:14865"/>
<dbReference type="CTD" id="80712"/>
<dbReference type="DisGeNET" id="80712"/>
<dbReference type="GeneCards" id="ESX1"/>
<dbReference type="HGNC" id="HGNC:14865">
    <property type="gene designation" value="ESX1"/>
</dbReference>
<dbReference type="HPA" id="ENSG00000123576">
    <property type="expression patterns" value="Tissue enriched (testis)"/>
</dbReference>
<dbReference type="MIM" id="300154">
    <property type="type" value="gene"/>
</dbReference>
<dbReference type="neXtProt" id="NX_Q8N693"/>
<dbReference type="OpenTargets" id="ENSG00000123576"/>
<dbReference type="PharmGKB" id="PA27892"/>
<dbReference type="VEuPathDB" id="HostDB:ENSG00000123576"/>
<dbReference type="eggNOG" id="KOG0490">
    <property type="taxonomic scope" value="Eukaryota"/>
</dbReference>
<dbReference type="GeneTree" id="ENSGT00940000163297"/>
<dbReference type="HOGENOM" id="CLU_044595_0_0_1"/>
<dbReference type="InParanoid" id="Q8N693"/>
<dbReference type="OMA" id="FDEAQYP"/>
<dbReference type="OrthoDB" id="6159439at2759"/>
<dbReference type="PAN-GO" id="Q8N693">
    <property type="GO annotations" value="3 GO annotations based on evolutionary models"/>
</dbReference>
<dbReference type="PhylomeDB" id="Q8N693"/>
<dbReference type="TreeFam" id="TF315976"/>
<dbReference type="PathwayCommons" id="Q8N693"/>
<dbReference type="SignaLink" id="Q8N693"/>
<dbReference type="BioGRID-ORCS" id="80712">
    <property type="hits" value="13 hits in 796 CRISPR screens"/>
</dbReference>
<dbReference type="GeneWiki" id="ESX1"/>
<dbReference type="GenomeRNAi" id="80712"/>
<dbReference type="Pharos" id="Q8N693">
    <property type="development level" value="Tbio"/>
</dbReference>
<dbReference type="PRO" id="PR:Q8N693"/>
<dbReference type="Proteomes" id="UP000005640">
    <property type="component" value="Chromosome X"/>
</dbReference>
<dbReference type="RNAct" id="Q8N693">
    <property type="molecule type" value="protein"/>
</dbReference>
<dbReference type="Bgee" id="ENSG00000123576">
    <property type="expression patterns" value="Expressed in male germ line stem cell (sensu Vertebrata) in testis and 21 other cell types or tissues"/>
</dbReference>
<dbReference type="GO" id="GO:0000785">
    <property type="term" value="C:chromatin"/>
    <property type="evidence" value="ECO:0000247"/>
    <property type="project" value="NTNU_SB"/>
</dbReference>
<dbReference type="GO" id="GO:0005737">
    <property type="term" value="C:cytoplasm"/>
    <property type="evidence" value="ECO:0000314"/>
    <property type="project" value="UniProtKB"/>
</dbReference>
<dbReference type="GO" id="GO:0016607">
    <property type="term" value="C:nuclear speck"/>
    <property type="evidence" value="ECO:0000314"/>
    <property type="project" value="HPA"/>
</dbReference>
<dbReference type="GO" id="GO:0005634">
    <property type="term" value="C:nucleus"/>
    <property type="evidence" value="ECO:0000314"/>
    <property type="project" value="UniProtKB"/>
</dbReference>
<dbReference type="GO" id="GO:0000981">
    <property type="term" value="F:DNA-binding transcription factor activity, RNA polymerase II-specific"/>
    <property type="evidence" value="ECO:0000247"/>
    <property type="project" value="NTNU_SB"/>
</dbReference>
<dbReference type="GO" id="GO:0001227">
    <property type="term" value="F:DNA-binding transcription repressor activity, RNA polymerase II-specific"/>
    <property type="evidence" value="ECO:0000314"/>
    <property type="project" value="NTNU_SB"/>
</dbReference>
<dbReference type="GO" id="GO:0000977">
    <property type="term" value="F:RNA polymerase II transcription regulatory region sequence-specific DNA binding"/>
    <property type="evidence" value="ECO:0000315"/>
    <property type="project" value="NTNU_SB"/>
</dbReference>
<dbReference type="GO" id="GO:0043565">
    <property type="term" value="F:sequence-specific DNA binding"/>
    <property type="evidence" value="ECO:0000314"/>
    <property type="project" value="UniProtKB"/>
</dbReference>
<dbReference type="GO" id="GO:1990837">
    <property type="term" value="F:sequence-specific double-stranded DNA binding"/>
    <property type="evidence" value="ECO:0000314"/>
    <property type="project" value="ARUK-UCL"/>
</dbReference>
<dbReference type="GO" id="GO:0045892">
    <property type="term" value="P:negative regulation of DNA-templated transcription"/>
    <property type="evidence" value="ECO:0000314"/>
    <property type="project" value="UniProtKB"/>
</dbReference>
<dbReference type="GO" id="GO:0000122">
    <property type="term" value="P:negative regulation of transcription by RNA polymerase II"/>
    <property type="evidence" value="ECO:0000314"/>
    <property type="project" value="NTNU_SB"/>
</dbReference>
<dbReference type="GO" id="GO:0051726">
    <property type="term" value="P:regulation of cell cycle"/>
    <property type="evidence" value="ECO:0000314"/>
    <property type="project" value="UniProtKB"/>
</dbReference>
<dbReference type="GO" id="GO:0006357">
    <property type="term" value="P:regulation of transcription by RNA polymerase II"/>
    <property type="evidence" value="ECO:0000318"/>
    <property type="project" value="GO_Central"/>
</dbReference>
<dbReference type="CDD" id="cd00086">
    <property type="entry name" value="homeodomain"/>
    <property type="match status" value="1"/>
</dbReference>
<dbReference type="FunFam" id="1.10.10.60:FF:000361">
    <property type="entry name" value="ESX homeobox 1"/>
    <property type="match status" value="1"/>
</dbReference>
<dbReference type="Gene3D" id="1.10.10.60">
    <property type="entry name" value="Homeodomain-like"/>
    <property type="match status" value="1"/>
</dbReference>
<dbReference type="InterPro" id="IPR001356">
    <property type="entry name" value="HD"/>
</dbReference>
<dbReference type="InterPro" id="IPR017970">
    <property type="entry name" value="Homeobox_CS"/>
</dbReference>
<dbReference type="InterPro" id="IPR009057">
    <property type="entry name" value="Homeodomain-like_sf"/>
</dbReference>
<dbReference type="InterPro" id="IPR050649">
    <property type="entry name" value="Paired_Homeobox_TFs"/>
</dbReference>
<dbReference type="InterPro" id="IPR013847">
    <property type="entry name" value="POU"/>
</dbReference>
<dbReference type="PANTHER" id="PTHR24329">
    <property type="entry name" value="HOMEOBOX PROTEIN ARISTALESS"/>
    <property type="match status" value="1"/>
</dbReference>
<dbReference type="PANTHER" id="PTHR24329:SF545">
    <property type="entry name" value="HOMEOBOX PROTEIN ESX1"/>
    <property type="match status" value="1"/>
</dbReference>
<dbReference type="Pfam" id="PF00046">
    <property type="entry name" value="Homeodomain"/>
    <property type="match status" value="1"/>
</dbReference>
<dbReference type="PRINTS" id="PR00028">
    <property type="entry name" value="POUDOMAIN"/>
</dbReference>
<dbReference type="SMART" id="SM00389">
    <property type="entry name" value="HOX"/>
    <property type="match status" value="1"/>
</dbReference>
<dbReference type="SUPFAM" id="SSF46689">
    <property type="entry name" value="Homeodomain-like"/>
    <property type="match status" value="1"/>
</dbReference>
<dbReference type="PROSITE" id="PS00027">
    <property type="entry name" value="HOMEOBOX_1"/>
    <property type="match status" value="1"/>
</dbReference>
<dbReference type="PROSITE" id="PS50071">
    <property type="entry name" value="HOMEOBOX_2"/>
    <property type="match status" value="1"/>
</dbReference>
<accession>Q8N693</accession>
<accession>B0QYU3</accession>
<accession>Q7Z6K7</accession>
<keyword id="KW-0963">Cytoplasm</keyword>
<keyword id="KW-0238">DNA-binding</keyword>
<keyword id="KW-0371">Homeobox</keyword>
<keyword id="KW-0539">Nucleus</keyword>
<keyword id="KW-1267">Proteomics identification</keyword>
<keyword id="KW-1185">Reference proteome</keyword>
<keyword id="KW-0677">Repeat</keyword>
<keyword id="KW-0678">Repressor</keyword>
<keyword id="KW-0804">Transcription</keyword>
<keyword id="KW-0805">Transcription regulation</keyword>
<sequence length="406" mass="44297">MESLRGYTHSDIGYRSLAVGEDIEEVNDEKLTVTSLMARGGEDEENTRSKPEYGTEAENNVGTEGSVPSDDQDREGGGGHEPEQQQEEPPLTKPEQQQEEPPLLELKQEQEEPPQTTVEGPQPAEGPQTAEGPQPPERKRRRRTAFTQFQLQELENFFDESQYPDVVARERLAARLNLTEDRVQVWFQNRRAKWKRNQRVLMLRNTATADLAHPLDMFLGGAYYAAPALDPALCVHLVPQLPRPPVLPVPPMPPRPPMVPMPPRPPIAPMPPMAPVPPGSRMAPVPPGPRMAPVPPWPPMAPVPPWPPMAPVPTGPPMAPVPPGPPMARVPPGPPMARVPPGPPMAPLPPGPPMAPLPPGPPMAPLPPGPPMAPLPPRSHVPHTGLAPVHITWAPVINSYYACPFF</sequence>
<feature type="chain" id="PRO_0000048876" description="Homeobox protein ESX1">
    <location>
        <begin position="1"/>
        <end position="406"/>
    </location>
</feature>
<feature type="chain" id="PRO_0000386625" description="Homeobox protein ESX1-N">
    <location>
        <begin position="1"/>
        <end status="unknown"/>
    </location>
</feature>
<feature type="chain" id="PRO_0000386626" description="Homeobox protein ESX1-C">
    <location>
        <begin status="unknown"/>
        <end position="406"/>
    </location>
</feature>
<feature type="repeat" description="1">
    <location>
        <begin position="244"/>
        <end position="252"/>
    </location>
</feature>
<feature type="repeat" description="2">
    <location>
        <begin position="253"/>
        <end position="261"/>
    </location>
</feature>
<feature type="repeat" description="3">
    <location>
        <begin position="262"/>
        <end position="270"/>
    </location>
</feature>
<feature type="repeat" description="4">
    <location>
        <begin position="271"/>
        <end position="279"/>
    </location>
</feature>
<feature type="repeat" description="5">
    <location>
        <begin position="280"/>
        <end position="288"/>
    </location>
</feature>
<feature type="repeat" description="6">
    <location>
        <begin position="289"/>
        <end position="297"/>
    </location>
</feature>
<feature type="repeat" description="7">
    <location>
        <begin position="298"/>
        <end position="306"/>
    </location>
</feature>
<feature type="repeat" description="8">
    <location>
        <begin position="307"/>
        <end position="315"/>
    </location>
</feature>
<feature type="repeat" description="9">
    <location>
        <begin position="316"/>
        <end position="324"/>
    </location>
</feature>
<feature type="repeat" description="10">
    <location>
        <begin position="325"/>
        <end position="333"/>
    </location>
</feature>
<feature type="repeat" description="11">
    <location>
        <begin position="334"/>
        <end position="342"/>
    </location>
</feature>
<feature type="repeat" description="12">
    <location>
        <begin position="343"/>
        <end position="351"/>
    </location>
</feature>
<feature type="repeat" description="13">
    <location>
        <begin position="352"/>
        <end position="360"/>
    </location>
</feature>
<feature type="repeat" description="14">
    <location>
        <begin position="361"/>
        <end position="369"/>
    </location>
</feature>
<feature type="repeat" description="15">
    <location>
        <begin position="370"/>
        <end position="378"/>
    </location>
</feature>
<feature type="DNA-binding region" description="Homeobox" evidence="2">
    <location>
        <begin position="139"/>
        <end position="198"/>
    </location>
</feature>
<feature type="region of interest" description="Disordered" evidence="3">
    <location>
        <begin position="1"/>
        <end position="21"/>
    </location>
</feature>
<feature type="region of interest" description="Disordered" evidence="3">
    <location>
        <begin position="33"/>
        <end position="142"/>
    </location>
</feature>
<feature type="region of interest" description="15 X 9 AA tandem repeats of P-P-x-x-P-x-P-P-x">
    <location>
        <begin position="244"/>
        <end position="378"/>
    </location>
</feature>
<feature type="region of interest" description="Disordered" evidence="3">
    <location>
        <begin position="341"/>
        <end position="364"/>
    </location>
</feature>
<feature type="short sequence motif" description="Nuclear localization signal" evidence="1">
    <location>
        <begin position="138"/>
        <end position="143"/>
    </location>
</feature>
<feature type="compositionally biased region" description="Basic and acidic residues" evidence="3">
    <location>
        <begin position="74"/>
        <end position="83"/>
    </location>
</feature>
<feature type="compositionally biased region" description="Low complexity" evidence="3">
    <location>
        <begin position="87"/>
        <end position="105"/>
    </location>
</feature>
<feature type="compositionally biased region" description="Low complexity" evidence="3">
    <location>
        <begin position="113"/>
        <end position="123"/>
    </location>
</feature>
<feature type="sequence variant" id="VAR_059352" description="In dbSNP:rs9697856.">
    <original>T</original>
    <variation>P</variation>
    <location>
        <position position="314"/>
    </location>
</feature>
<feature type="sequence conflict" description="In Ref. 5; AAH42633/AAH53599." evidence="7" ref="5">
    <original>P</original>
    <variation>R</variation>
    <location>
        <position position="320"/>
    </location>
</feature>
<feature type="sequence conflict" description="In Ref. 5; AAH42633/AAH53599." evidence="7" ref="5">
    <original>RV</original>
    <variation>PL</variation>
    <location>
        <begin position="338"/>
        <end position="339"/>
    </location>
</feature>
<protein>
    <recommendedName>
        <fullName>Homeobox protein ESX1</fullName>
    </recommendedName>
    <alternativeName>
        <fullName>Extraembryonic, spermatogenesis, homeobox 1</fullName>
    </alternativeName>
    <component>
        <recommendedName>
            <fullName>Homeobox protein ESX1-N</fullName>
        </recommendedName>
    </component>
    <component>
        <recommendedName>
            <fullName>Homeobox protein ESX1-C</fullName>
        </recommendedName>
    </component>
</protein>
<gene>
    <name type="primary">ESX1</name>
    <name type="synonym">ESX1L</name>
    <name type="synonym">ESX1R</name>
</gene>
<evidence type="ECO:0000255" key="1"/>
<evidence type="ECO:0000255" key="2">
    <source>
        <dbReference type="PROSITE-ProRule" id="PRU00108"/>
    </source>
</evidence>
<evidence type="ECO:0000256" key="3">
    <source>
        <dbReference type="SAM" id="MobiDB-lite"/>
    </source>
</evidence>
<evidence type="ECO:0000269" key="4">
    <source>
    </source>
</evidence>
<evidence type="ECO:0000269" key="5">
    <source>
    </source>
</evidence>
<evidence type="ECO:0000269" key="6">
    <source>
    </source>
</evidence>
<evidence type="ECO:0000305" key="7"/>
<name>ESX1_HUMAN</name>
<reference key="1">
    <citation type="journal article" date="2001" name="Genomics">
        <title>ESX1L, a novel X chromosome-linked human homeobox gene expressed in the placenta and testis.</title>
        <authorList>
            <person name="Fohn L.E."/>
            <person name="Behringer R.R."/>
        </authorList>
    </citation>
    <scope>NUCLEOTIDE SEQUENCE [MRNA]</scope>
    <scope>TISSUE SPECIFICITY</scope>
    <source>
        <tissue>Germ cell</tissue>
    </source>
</reference>
<reference key="2">
    <citation type="journal article" date="2004" name="Oncogene">
        <title>Paired-like homeodomain protein ESXR1 possesses a cleavable C-terminal region that inhibits cyclin degradation.</title>
        <authorList>
            <person name="Ozawa H."/>
            <person name="Ashizawa S."/>
            <person name="Naito M."/>
            <person name="Yanagihara M."/>
            <person name="Ohnishi N."/>
            <person name="Maeda T."/>
            <person name="Matsuda Y."/>
            <person name="Jo Y."/>
            <person name="Higashi H."/>
            <person name="Kakita A."/>
            <person name="Hatakeyama M."/>
        </authorList>
    </citation>
    <scope>NUCLEOTIDE SEQUENCE [MRNA]</scope>
    <scope>FUNCTION</scope>
    <scope>PROTEOLYTIC PROCESSING</scope>
    <scope>SUBCELLULAR LOCATION</scope>
    <scope>TISSUE SPECIFICITY</scope>
</reference>
<reference key="3">
    <citation type="journal article" date="2005" name="Nature">
        <title>The DNA sequence of the human X chromosome.</title>
        <authorList>
            <person name="Ross M.T."/>
            <person name="Grafham D.V."/>
            <person name="Coffey A.J."/>
            <person name="Scherer S."/>
            <person name="McLay K."/>
            <person name="Muzny D."/>
            <person name="Platzer M."/>
            <person name="Howell G.R."/>
            <person name="Burrows C."/>
            <person name="Bird C.P."/>
            <person name="Frankish A."/>
            <person name="Lovell F.L."/>
            <person name="Howe K.L."/>
            <person name="Ashurst J.L."/>
            <person name="Fulton R.S."/>
            <person name="Sudbrak R."/>
            <person name="Wen G."/>
            <person name="Jones M.C."/>
            <person name="Hurles M.E."/>
            <person name="Andrews T.D."/>
            <person name="Scott C.E."/>
            <person name="Searle S."/>
            <person name="Ramser J."/>
            <person name="Whittaker A."/>
            <person name="Deadman R."/>
            <person name="Carter N.P."/>
            <person name="Hunt S.E."/>
            <person name="Chen R."/>
            <person name="Cree A."/>
            <person name="Gunaratne P."/>
            <person name="Havlak P."/>
            <person name="Hodgson A."/>
            <person name="Metzker M.L."/>
            <person name="Richards S."/>
            <person name="Scott G."/>
            <person name="Steffen D."/>
            <person name="Sodergren E."/>
            <person name="Wheeler D.A."/>
            <person name="Worley K.C."/>
            <person name="Ainscough R."/>
            <person name="Ambrose K.D."/>
            <person name="Ansari-Lari M.A."/>
            <person name="Aradhya S."/>
            <person name="Ashwell R.I."/>
            <person name="Babbage A.K."/>
            <person name="Bagguley C.L."/>
            <person name="Ballabio A."/>
            <person name="Banerjee R."/>
            <person name="Barker G.E."/>
            <person name="Barlow K.F."/>
            <person name="Barrett I.P."/>
            <person name="Bates K.N."/>
            <person name="Beare D.M."/>
            <person name="Beasley H."/>
            <person name="Beasley O."/>
            <person name="Beck A."/>
            <person name="Bethel G."/>
            <person name="Blechschmidt K."/>
            <person name="Brady N."/>
            <person name="Bray-Allen S."/>
            <person name="Bridgeman A.M."/>
            <person name="Brown A.J."/>
            <person name="Brown M.J."/>
            <person name="Bonnin D."/>
            <person name="Bruford E.A."/>
            <person name="Buhay C."/>
            <person name="Burch P."/>
            <person name="Burford D."/>
            <person name="Burgess J."/>
            <person name="Burrill W."/>
            <person name="Burton J."/>
            <person name="Bye J.M."/>
            <person name="Carder C."/>
            <person name="Carrel L."/>
            <person name="Chako J."/>
            <person name="Chapman J.C."/>
            <person name="Chavez D."/>
            <person name="Chen E."/>
            <person name="Chen G."/>
            <person name="Chen Y."/>
            <person name="Chen Z."/>
            <person name="Chinault C."/>
            <person name="Ciccodicola A."/>
            <person name="Clark S.Y."/>
            <person name="Clarke G."/>
            <person name="Clee C.M."/>
            <person name="Clegg S."/>
            <person name="Clerc-Blankenburg K."/>
            <person name="Clifford K."/>
            <person name="Cobley V."/>
            <person name="Cole C.G."/>
            <person name="Conquer J.S."/>
            <person name="Corby N."/>
            <person name="Connor R.E."/>
            <person name="David R."/>
            <person name="Davies J."/>
            <person name="Davis C."/>
            <person name="Davis J."/>
            <person name="Delgado O."/>
            <person name="Deshazo D."/>
            <person name="Dhami P."/>
            <person name="Ding Y."/>
            <person name="Dinh H."/>
            <person name="Dodsworth S."/>
            <person name="Draper H."/>
            <person name="Dugan-Rocha S."/>
            <person name="Dunham A."/>
            <person name="Dunn M."/>
            <person name="Durbin K.J."/>
            <person name="Dutta I."/>
            <person name="Eades T."/>
            <person name="Ellwood M."/>
            <person name="Emery-Cohen A."/>
            <person name="Errington H."/>
            <person name="Evans K.L."/>
            <person name="Faulkner L."/>
            <person name="Francis F."/>
            <person name="Frankland J."/>
            <person name="Fraser A.E."/>
            <person name="Galgoczy P."/>
            <person name="Gilbert J."/>
            <person name="Gill R."/>
            <person name="Gloeckner G."/>
            <person name="Gregory S.G."/>
            <person name="Gribble S."/>
            <person name="Griffiths C."/>
            <person name="Grocock R."/>
            <person name="Gu Y."/>
            <person name="Gwilliam R."/>
            <person name="Hamilton C."/>
            <person name="Hart E.A."/>
            <person name="Hawes A."/>
            <person name="Heath P.D."/>
            <person name="Heitmann K."/>
            <person name="Hennig S."/>
            <person name="Hernandez J."/>
            <person name="Hinzmann B."/>
            <person name="Ho S."/>
            <person name="Hoffs M."/>
            <person name="Howden P.J."/>
            <person name="Huckle E.J."/>
            <person name="Hume J."/>
            <person name="Hunt P.J."/>
            <person name="Hunt A.R."/>
            <person name="Isherwood J."/>
            <person name="Jacob L."/>
            <person name="Johnson D."/>
            <person name="Jones S."/>
            <person name="de Jong P.J."/>
            <person name="Joseph S.S."/>
            <person name="Keenan S."/>
            <person name="Kelly S."/>
            <person name="Kershaw J.K."/>
            <person name="Khan Z."/>
            <person name="Kioschis P."/>
            <person name="Klages S."/>
            <person name="Knights A.J."/>
            <person name="Kosiura A."/>
            <person name="Kovar-Smith C."/>
            <person name="Laird G.K."/>
            <person name="Langford C."/>
            <person name="Lawlor S."/>
            <person name="Leversha M."/>
            <person name="Lewis L."/>
            <person name="Liu W."/>
            <person name="Lloyd C."/>
            <person name="Lloyd D.M."/>
            <person name="Loulseged H."/>
            <person name="Loveland J.E."/>
            <person name="Lovell J.D."/>
            <person name="Lozado R."/>
            <person name="Lu J."/>
            <person name="Lyne R."/>
            <person name="Ma J."/>
            <person name="Maheshwari M."/>
            <person name="Matthews L.H."/>
            <person name="McDowall J."/>
            <person name="McLaren S."/>
            <person name="McMurray A."/>
            <person name="Meidl P."/>
            <person name="Meitinger T."/>
            <person name="Milne S."/>
            <person name="Miner G."/>
            <person name="Mistry S.L."/>
            <person name="Morgan M."/>
            <person name="Morris S."/>
            <person name="Mueller I."/>
            <person name="Mullikin J.C."/>
            <person name="Nguyen N."/>
            <person name="Nordsiek G."/>
            <person name="Nyakatura G."/>
            <person name="O'dell C.N."/>
            <person name="Okwuonu G."/>
            <person name="Palmer S."/>
            <person name="Pandian R."/>
            <person name="Parker D."/>
            <person name="Parrish J."/>
            <person name="Pasternak S."/>
            <person name="Patel D."/>
            <person name="Pearce A.V."/>
            <person name="Pearson D.M."/>
            <person name="Pelan S.E."/>
            <person name="Perez L."/>
            <person name="Porter K.M."/>
            <person name="Ramsey Y."/>
            <person name="Reichwald K."/>
            <person name="Rhodes S."/>
            <person name="Ridler K.A."/>
            <person name="Schlessinger D."/>
            <person name="Schueler M.G."/>
            <person name="Sehra H.K."/>
            <person name="Shaw-Smith C."/>
            <person name="Shen H."/>
            <person name="Sheridan E.M."/>
            <person name="Shownkeen R."/>
            <person name="Skuce C.D."/>
            <person name="Smith M.L."/>
            <person name="Sotheran E.C."/>
            <person name="Steingruber H.E."/>
            <person name="Steward C.A."/>
            <person name="Storey R."/>
            <person name="Swann R.M."/>
            <person name="Swarbreck D."/>
            <person name="Tabor P.E."/>
            <person name="Taudien S."/>
            <person name="Taylor T."/>
            <person name="Teague B."/>
            <person name="Thomas K."/>
            <person name="Thorpe A."/>
            <person name="Timms K."/>
            <person name="Tracey A."/>
            <person name="Trevanion S."/>
            <person name="Tromans A.C."/>
            <person name="d'Urso M."/>
            <person name="Verduzco D."/>
            <person name="Villasana D."/>
            <person name="Waldron L."/>
            <person name="Wall M."/>
            <person name="Wang Q."/>
            <person name="Warren J."/>
            <person name="Warry G.L."/>
            <person name="Wei X."/>
            <person name="West A."/>
            <person name="Whitehead S.L."/>
            <person name="Whiteley M.N."/>
            <person name="Wilkinson J.E."/>
            <person name="Willey D.L."/>
            <person name="Williams G."/>
            <person name="Williams L."/>
            <person name="Williamson A."/>
            <person name="Williamson H."/>
            <person name="Wilming L."/>
            <person name="Woodmansey R.L."/>
            <person name="Wray P.W."/>
            <person name="Yen J."/>
            <person name="Zhang J."/>
            <person name="Zhou J."/>
            <person name="Zoghbi H."/>
            <person name="Zorilla S."/>
            <person name="Buck D."/>
            <person name="Reinhardt R."/>
            <person name="Poustka A."/>
            <person name="Rosenthal A."/>
            <person name="Lehrach H."/>
            <person name="Meindl A."/>
            <person name="Minx P.J."/>
            <person name="Hillier L.W."/>
            <person name="Willard H.F."/>
            <person name="Wilson R.K."/>
            <person name="Waterston R.H."/>
            <person name="Rice C.M."/>
            <person name="Vaudin M."/>
            <person name="Coulson A."/>
            <person name="Nelson D.L."/>
            <person name="Weinstock G."/>
            <person name="Sulston J.E."/>
            <person name="Durbin R.M."/>
            <person name="Hubbard T."/>
            <person name="Gibbs R.A."/>
            <person name="Beck S."/>
            <person name="Rogers J."/>
            <person name="Bentley D.R."/>
        </authorList>
    </citation>
    <scope>NUCLEOTIDE SEQUENCE [LARGE SCALE GENOMIC DNA]</scope>
</reference>
<reference key="4">
    <citation type="submission" date="2005-09" db="EMBL/GenBank/DDBJ databases">
        <authorList>
            <person name="Mural R.J."/>
            <person name="Istrail S."/>
            <person name="Sutton G.G."/>
            <person name="Florea L."/>
            <person name="Halpern A.L."/>
            <person name="Mobarry C.M."/>
            <person name="Lippert R."/>
            <person name="Walenz B."/>
            <person name="Shatkay H."/>
            <person name="Dew I."/>
            <person name="Miller J.R."/>
            <person name="Flanigan M.J."/>
            <person name="Edwards N.J."/>
            <person name="Bolanos R."/>
            <person name="Fasulo D."/>
            <person name="Halldorsson B.V."/>
            <person name="Hannenhalli S."/>
            <person name="Turner R."/>
            <person name="Yooseph S."/>
            <person name="Lu F."/>
            <person name="Nusskern D.R."/>
            <person name="Shue B.C."/>
            <person name="Zheng X.H."/>
            <person name="Zhong F."/>
            <person name="Delcher A.L."/>
            <person name="Huson D.H."/>
            <person name="Kravitz S.A."/>
            <person name="Mouchard L."/>
            <person name="Reinert K."/>
            <person name="Remington K.A."/>
            <person name="Clark A.G."/>
            <person name="Waterman M.S."/>
            <person name="Eichler E.E."/>
            <person name="Adams M.D."/>
            <person name="Hunkapiller M.W."/>
            <person name="Myers E.W."/>
            <person name="Venter J.C."/>
        </authorList>
    </citation>
    <scope>NUCLEOTIDE SEQUENCE [LARGE SCALE GENOMIC DNA]</scope>
</reference>
<reference key="5">
    <citation type="journal article" date="2004" name="Genome Res.">
        <title>The status, quality, and expansion of the NIH full-length cDNA project: the Mammalian Gene Collection (MGC).</title>
        <authorList>
            <consortium name="The MGC Project Team"/>
        </authorList>
    </citation>
    <scope>NUCLEOTIDE SEQUENCE [LARGE SCALE MRNA]</scope>
    <source>
        <tissue>Brain</tissue>
    </source>
</reference>
<reference key="6">
    <citation type="journal article" date="2005" name="Oncogene">
        <title>Paired-like homeoprotein ESXR1 acts as a sequence-specific transcriptional repressor of the human K-ras gene.</title>
        <authorList>
            <person name="Yanagihara M."/>
            <person name="Ishikawa S."/>
            <person name="Naito M."/>
            <person name="Nakajima J."/>
            <person name="Aburatani H."/>
            <person name="Hatakeyama M."/>
        </authorList>
    </citation>
    <scope>FUNCTION</scope>
</reference>
<organism>
    <name type="scientific">Homo sapiens</name>
    <name type="common">Human</name>
    <dbReference type="NCBI Taxonomy" id="9606"/>
    <lineage>
        <taxon>Eukaryota</taxon>
        <taxon>Metazoa</taxon>
        <taxon>Chordata</taxon>
        <taxon>Craniata</taxon>
        <taxon>Vertebrata</taxon>
        <taxon>Euteleostomi</taxon>
        <taxon>Mammalia</taxon>
        <taxon>Eutheria</taxon>
        <taxon>Euarchontoglires</taxon>
        <taxon>Primates</taxon>
        <taxon>Haplorrhini</taxon>
        <taxon>Catarrhini</taxon>
        <taxon>Hominidae</taxon>
        <taxon>Homo</taxon>
    </lineage>
</organism>